<keyword id="KW-0520">NAD</keyword>
<keyword id="KW-0560">Oxidoreductase</keyword>
<keyword id="KW-1185">Reference proteome</keyword>
<keyword id="KW-0816">Tricarboxylic acid cycle</keyword>
<gene>
    <name evidence="2" type="primary">mdh</name>
    <name type="ordered locus">BP2365</name>
</gene>
<name>MDH_BORPE</name>
<dbReference type="EC" id="1.1.1.37" evidence="2"/>
<dbReference type="EMBL" id="BX640418">
    <property type="protein sequence ID" value="CAE42637.1"/>
    <property type="molecule type" value="Genomic_DNA"/>
</dbReference>
<dbReference type="RefSeq" id="NP_881001.1">
    <property type="nucleotide sequence ID" value="NC_002929.2"/>
</dbReference>
<dbReference type="RefSeq" id="WP_003813657.1">
    <property type="nucleotide sequence ID" value="NZ_CP039022.1"/>
</dbReference>
<dbReference type="SMR" id="Q7VW97"/>
<dbReference type="STRING" id="257313.BP2365"/>
<dbReference type="PaxDb" id="257313-BP2365"/>
<dbReference type="KEGG" id="bpe:BP2365"/>
<dbReference type="PATRIC" id="fig|257313.5.peg.2547"/>
<dbReference type="eggNOG" id="COG0039">
    <property type="taxonomic scope" value="Bacteria"/>
</dbReference>
<dbReference type="HOGENOM" id="CLU_040727_2_0_4"/>
<dbReference type="Proteomes" id="UP000002676">
    <property type="component" value="Chromosome"/>
</dbReference>
<dbReference type="GO" id="GO:0030060">
    <property type="term" value="F:L-malate dehydrogenase (NAD+) activity"/>
    <property type="evidence" value="ECO:0007669"/>
    <property type="project" value="UniProtKB-UniRule"/>
</dbReference>
<dbReference type="GO" id="GO:0006108">
    <property type="term" value="P:malate metabolic process"/>
    <property type="evidence" value="ECO:0007669"/>
    <property type="project" value="InterPro"/>
</dbReference>
<dbReference type="GO" id="GO:0006099">
    <property type="term" value="P:tricarboxylic acid cycle"/>
    <property type="evidence" value="ECO:0007669"/>
    <property type="project" value="UniProtKB-UniRule"/>
</dbReference>
<dbReference type="CDD" id="cd01338">
    <property type="entry name" value="MDH_chloroplast-like"/>
    <property type="match status" value="1"/>
</dbReference>
<dbReference type="FunFam" id="3.40.50.720:FF:000010">
    <property type="entry name" value="Malate dehydrogenase"/>
    <property type="match status" value="1"/>
</dbReference>
<dbReference type="FunFam" id="3.90.110.10:FF:000002">
    <property type="entry name" value="Malate dehydrogenase"/>
    <property type="match status" value="1"/>
</dbReference>
<dbReference type="Gene3D" id="3.90.110.10">
    <property type="entry name" value="Lactate dehydrogenase/glycoside hydrolase, family 4, C-terminal"/>
    <property type="match status" value="1"/>
</dbReference>
<dbReference type="Gene3D" id="3.40.50.720">
    <property type="entry name" value="NAD(P)-binding Rossmann-like Domain"/>
    <property type="match status" value="1"/>
</dbReference>
<dbReference type="HAMAP" id="MF_01517">
    <property type="entry name" value="Malate_dehydrog_2"/>
    <property type="match status" value="1"/>
</dbReference>
<dbReference type="InterPro" id="IPR001557">
    <property type="entry name" value="L-lactate/malate_DH"/>
</dbReference>
<dbReference type="InterPro" id="IPR022383">
    <property type="entry name" value="Lactate/malate_DH_C"/>
</dbReference>
<dbReference type="InterPro" id="IPR001236">
    <property type="entry name" value="Lactate/malate_DH_N"/>
</dbReference>
<dbReference type="InterPro" id="IPR015955">
    <property type="entry name" value="Lactate_DH/Glyco_Ohase_4_C"/>
</dbReference>
<dbReference type="InterPro" id="IPR010945">
    <property type="entry name" value="Malate_DH_type2"/>
</dbReference>
<dbReference type="InterPro" id="IPR036291">
    <property type="entry name" value="NAD(P)-bd_dom_sf"/>
</dbReference>
<dbReference type="NCBIfam" id="TIGR01759">
    <property type="entry name" value="MalateDH-SF1"/>
    <property type="match status" value="1"/>
</dbReference>
<dbReference type="NCBIfam" id="NF003916">
    <property type="entry name" value="PRK05442.1"/>
    <property type="match status" value="1"/>
</dbReference>
<dbReference type="PANTHER" id="PTHR23382">
    <property type="entry name" value="MALATE DEHYDROGENASE"/>
    <property type="match status" value="1"/>
</dbReference>
<dbReference type="Pfam" id="PF02866">
    <property type="entry name" value="Ldh_1_C"/>
    <property type="match status" value="1"/>
</dbReference>
<dbReference type="Pfam" id="PF00056">
    <property type="entry name" value="Ldh_1_N"/>
    <property type="match status" value="1"/>
</dbReference>
<dbReference type="PIRSF" id="PIRSF000102">
    <property type="entry name" value="Lac_mal_DH"/>
    <property type="match status" value="1"/>
</dbReference>
<dbReference type="SUPFAM" id="SSF56327">
    <property type="entry name" value="LDH C-terminal domain-like"/>
    <property type="match status" value="1"/>
</dbReference>
<dbReference type="SUPFAM" id="SSF51735">
    <property type="entry name" value="NAD(P)-binding Rossmann-fold domains"/>
    <property type="match status" value="1"/>
</dbReference>
<sequence length="329" mass="35664">MSKPALRVAVTGAAGQIGYALLFRIASGEMLGKDQPVILQLLEIPDEKAQKALKGVIMELEDCAFPLLHEVTAHSDPRTAFKDADVALLVGARPRGPGMERKDLLSVNAQIFTAQGRALNDVASRNVKVLVVGNPANTNAYIAMKSAPDLPAKNFTAMLRLDHNRALSQLSAKSGKRVADIEKLIVWGNHSPTMYPDFRFATVGGQGLTQLINDDAWNRDTFIPTVGKRGAAIIEARGLSSAASAANAAIDHVRDWVLGSNGKWVTMGIPSDGSYGIPEGIIYGFPVVTENGEYKMIKDLEIDAFSRERLDFTLKELLEERDGVKDLLK</sequence>
<evidence type="ECO:0000250" key="1"/>
<evidence type="ECO:0000255" key="2">
    <source>
        <dbReference type="HAMAP-Rule" id="MF_01517"/>
    </source>
</evidence>
<protein>
    <recommendedName>
        <fullName evidence="2">Malate dehydrogenase</fullName>
        <ecNumber evidence="2">1.1.1.37</ecNumber>
    </recommendedName>
</protein>
<feature type="initiator methionine" description="Removed" evidence="1">
    <location>
        <position position="1"/>
    </location>
</feature>
<feature type="chain" id="PRO_0000113351" description="Malate dehydrogenase">
    <location>
        <begin position="2"/>
        <end position="329"/>
    </location>
</feature>
<feature type="active site" description="Proton acceptor" evidence="2">
    <location>
        <position position="190"/>
    </location>
</feature>
<feature type="binding site" evidence="2">
    <location>
        <begin position="12"/>
        <end position="18"/>
    </location>
    <ligand>
        <name>NAD(+)</name>
        <dbReference type="ChEBI" id="CHEBI:57540"/>
    </ligand>
</feature>
<feature type="binding site" evidence="2">
    <location>
        <position position="95"/>
    </location>
    <ligand>
        <name>substrate</name>
    </ligand>
</feature>
<feature type="binding site" evidence="2">
    <location>
        <position position="101"/>
    </location>
    <ligand>
        <name>substrate</name>
    </ligand>
</feature>
<feature type="binding site" evidence="2">
    <location>
        <position position="108"/>
    </location>
    <ligand>
        <name>NAD(+)</name>
        <dbReference type="ChEBI" id="CHEBI:57540"/>
    </ligand>
</feature>
<feature type="binding site" evidence="2">
    <location>
        <position position="115"/>
    </location>
    <ligand>
        <name>NAD(+)</name>
        <dbReference type="ChEBI" id="CHEBI:57540"/>
    </ligand>
</feature>
<feature type="binding site" evidence="2">
    <location>
        <begin position="132"/>
        <end position="134"/>
    </location>
    <ligand>
        <name>NAD(+)</name>
        <dbReference type="ChEBI" id="CHEBI:57540"/>
    </ligand>
</feature>
<feature type="binding site" evidence="2">
    <location>
        <position position="134"/>
    </location>
    <ligand>
        <name>substrate</name>
    </ligand>
</feature>
<feature type="binding site" evidence="2">
    <location>
        <position position="165"/>
    </location>
    <ligand>
        <name>substrate</name>
    </ligand>
</feature>
<reference key="1">
    <citation type="journal article" date="2003" name="Nat. Genet.">
        <title>Comparative analysis of the genome sequences of Bordetella pertussis, Bordetella parapertussis and Bordetella bronchiseptica.</title>
        <authorList>
            <person name="Parkhill J."/>
            <person name="Sebaihia M."/>
            <person name="Preston A."/>
            <person name="Murphy L.D."/>
            <person name="Thomson N.R."/>
            <person name="Harris D.E."/>
            <person name="Holden M.T.G."/>
            <person name="Churcher C.M."/>
            <person name="Bentley S.D."/>
            <person name="Mungall K.L."/>
            <person name="Cerdeno-Tarraga A.-M."/>
            <person name="Temple L."/>
            <person name="James K.D."/>
            <person name="Harris B."/>
            <person name="Quail M.A."/>
            <person name="Achtman M."/>
            <person name="Atkin R."/>
            <person name="Baker S."/>
            <person name="Basham D."/>
            <person name="Bason N."/>
            <person name="Cherevach I."/>
            <person name="Chillingworth T."/>
            <person name="Collins M."/>
            <person name="Cronin A."/>
            <person name="Davis P."/>
            <person name="Doggett J."/>
            <person name="Feltwell T."/>
            <person name="Goble A."/>
            <person name="Hamlin N."/>
            <person name="Hauser H."/>
            <person name="Holroyd S."/>
            <person name="Jagels K."/>
            <person name="Leather S."/>
            <person name="Moule S."/>
            <person name="Norberczak H."/>
            <person name="O'Neil S."/>
            <person name="Ormond D."/>
            <person name="Price C."/>
            <person name="Rabbinowitsch E."/>
            <person name="Rutter S."/>
            <person name="Sanders M."/>
            <person name="Saunders D."/>
            <person name="Seeger K."/>
            <person name="Sharp S."/>
            <person name="Simmonds M."/>
            <person name="Skelton J."/>
            <person name="Squares R."/>
            <person name="Squares S."/>
            <person name="Stevens K."/>
            <person name="Unwin L."/>
            <person name="Whitehead S."/>
            <person name="Barrell B.G."/>
            <person name="Maskell D.J."/>
        </authorList>
    </citation>
    <scope>NUCLEOTIDE SEQUENCE [LARGE SCALE GENOMIC DNA]</scope>
    <source>
        <strain>Tohama I / ATCC BAA-589 / NCTC 13251</strain>
    </source>
</reference>
<comment type="function">
    <text evidence="2">Catalyzes the reversible oxidation of malate to oxaloacetate.</text>
</comment>
<comment type="catalytic activity">
    <reaction evidence="2">
        <text>(S)-malate + NAD(+) = oxaloacetate + NADH + H(+)</text>
        <dbReference type="Rhea" id="RHEA:21432"/>
        <dbReference type="ChEBI" id="CHEBI:15378"/>
        <dbReference type="ChEBI" id="CHEBI:15589"/>
        <dbReference type="ChEBI" id="CHEBI:16452"/>
        <dbReference type="ChEBI" id="CHEBI:57540"/>
        <dbReference type="ChEBI" id="CHEBI:57945"/>
        <dbReference type="EC" id="1.1.1.37"/>
    </reaction>
</comment>
<comment type="similarity">
    <text evidence="2">Belongs to the LDH/MDH superfamily. MDH type 2 family.</text>
</comment>
<proteinExistence type="inferred from homology"/>
<organism>
    <name type="scientific">Bordetella pertussis (strain Tohama I / ATCC BAA-589 / NCTC 13251)</name>
    <dbReference type="NCBI Taxonomy" id="257313"/>
    <lineage>
        <taxon>Bacteria</taxon>
        <taxon>Pseudomonadati</taxon>
        <taxon>Pseudomonadota</taxon>
        <taxon>Betaproteobacteria</taxon>
        <taxon>Burkholderiales</taxon>
        <taxon>Alcaligenaceae</taxon>
        <taxon>Bordetella</taxon>
    </lineage>
</organism>
<accession>Q7VW97</accession>